<feature type="chain" id="PRO_0000394997" description="Cation/H(+) antiporter 28">
    <location>
        <begin position="1"/>
        <end position="801"/>
    </location>
</feature>
<feature type="transmembrane region" description="Helical" evidence="2">
    <location>
        <begin position="24"/>
        <end position="44"/>
    </location>
</feature>
<feature type="transmembrane region" description="Helical" evidence="2">
    <location>
        <begin position="77"/>
        <end position="97"/>
    </location>
</feature>
<feature type="transmembrane region" description="Helical" evidence="2">
    <location>
        <begin position="113"/>
        <end position="133"/>
    </location>
</feature>
<feature type="transmembrane region" description="Helical" evidence="2">
    <location>
        <begin position="140"/>
        <end position="160"/>
    </location>
</feature>
<feature type="transmembrane region" description="Helical" evidence="2">
    <location>
        <begin position="179"/>
        <end position="199"/>
    </location>
</feature>
<feature type="transmembrane region" description="Helical" evidence="2">
    <location>
        <begin position="216"/>
        <end position="236"/>
    </location>
</feature>
<feature type="transmembrane region" description="Helical" evidence="2">
    <location>
        <begin position="252"/>
        <end position="272"/>
    </location>
</feature>
<feature type="transmembrane region" description="Helical" evidence="2">
    <location>
        <begin position="275"/>
        <end position="292"/>
    </location>
</feature>
<feature type="transmembrane region" description="Helical" evidence="2">
    <location>
        <begin position="304"/>
        <end position="324"/>
    </location>
</feature>
<feature type="transmembrane region" description="Helical" evidence="2">
    <location>
        <begin position="343"/>
        <end position="363"/>
    </location>
</feature>
<feature type="transmembrane region" description="Helical" evidence="2">
    <location>
        <begin position="371"/>
        <end position="391"/>
    </location>
</feature>
<feature type="transmembrane region" description="Helical" evidence="2">
    <location>
        <begin position="403"/>
        <end position="423"/>
    </location>
</feature>
<feature type="sequence conflict" description="In Ref. 3; AAM98175." evidence="4" ref="3">
    <original>S</original>
    <variation>L</variation>
    <location>
        <position position="275"/>
    </location>
</feature>
<feature type="sequence conflict" description="In Ref. 3; AAM98175." evidence="4" ref="3">
    <original>K</original>
    <variation>E</variation>
    <location>
        <position position="597"/>
    </location>
</feature>
<organism>
    <name type="scientific">Arabidopsis thaliana</name>
    <name type="common">Mouse-ear cress</name>
    <dbReference type="NCBI Taxonomy" id="3702"/>
    <lineage>
        <taxon>Eukaryota</taxon>
        <taxon>Viridiplantae</taxon>
        <taxon>Streptophyta</taxon>
        <taxon>Embryophyta</taxon>
        <taxon>Tracheophyta</taxon>
        <taxon>Spermatophyta</taxon>
        <taxon>Magnoliopsida</taxon>
        <taxon>eudicotyledons</taxon>
        <taxon>Gunneridae</taxon>
        <taxon>Pentapetalae</taxon>
        <taxon>rosids</taxon>
        <taxon>malvids</taxon>
        <taxon>Brassicales</taxon>
        <taxon>Brassicaceae</taxon>
        <taxon>Camelineae</taxon>
        <taxon>Arabidopsis</taxon>
    </lineage>
</organism>
<proteinExistence type="evidence at transcript level"/>
<name>CHX28_ARATH</name>
<evidence type="ECO:0000250" key="1"/>
<evidence type="ECO:0000255" key="2"/>
<evidence type="ECO:0000269" key="3">
    <source>
    </source>
</evidence>
<evidence type="ECO:0000305" key="4"/>
<keyword id="KW-0050">Antiport</keyword>
<keyword id="KW-0406">Ion transport</keyword>
<keyword id="KW-0472">Membrane</keyword>
<keyword id="KW-0630">Potassium</keyword>
<keyword id="KW-0633">Potassium transport</keyword>
<keyword id="KW-1185">Reference proteome</keyword>
<keyword id="KW-0812">Transmembrane</keyword>
<keyword id="KW-1133">Transmembrane helix</keyword>
<keyword id="KW-0813">Transport</keyword>
<protein>
    <recommendedName>
        <fullName>Cation/H(+) antiporter 28</fullName>
    </recommendedName>
    <alternativeName>
        <fullName>Protein CATION/H+ EXCHANGER 28</fullName>
        <shortName>AtCHX28</shortName>
    </alternativeName>
</protein>
<sequence>MNSTTTKNVCGDKWYLNLDRPEEALKILVFIAIFVVRTLLHYLMKPLGQPYLTTDFAIGLILGNIPRFRGAFSGPYSITLNNIIEFGMICHMFVMGLEMNPSVLLRPPTKDAFIAYTSMITTFVLAFVTTPFLHYTKTSPYIFSLALSLMASSTGSPILTRVIANLKIRKSDLGKLASAAGVHTDMISTLLYCFGFIFFPTEKPLARPLHRFFRALLMFCLFLAQVTFTSIVSPIFLNWVNNENPEGKPLKGSHLVMSLAFVVLICSFPTWPPESMYNPILSAFTAGLFLPNKGRMSKWIINKINYLLSTVFYPIFFFWVGFIIHMRNFDITDKMAWVRFFSLLGTVIAGKVTGTVLCGLLLGYHVPETASLGLLLTTKGHFHVYLAALAIRTNRVKSTTGALIIFIIVFTVVYSPFVVMDIIKRARKRVPVHIMALQWLDPTTELRILIGLHGPHNIGSTLNVMEICHGGREPGSIFYATDMVELTDEIAATLKKGGGAGQSNDSVTVTDRSVTEMRESITAAVNGYGELRNGQGVTVRRMLALSTFVTMAHDVCGLADELMVSIIILPFHKRLNPDGTLDAGHAGFRHVNRKILKNAPCSVGILVDRSFGQTEEAWRPGASMGIAIIFIGGRDDREALAFAAQVARHPAVKLKVIRFLEDKSSQNAQKRSSILNRASVVDQEEEMKLDDECFAEFYERYIAGGGRVSYMEKHLTNSSETFTALKSLDGEYGLVIVGRGGGRASSGLTTGLNDWQQCPELGPIGDVLSGSDFSHNTSMLIIQQQRTRGQLEGLHDDFTIL</sequence>
<reference key="1">
    <citation type="journal article" date="2000" name="Nature">
        <title>Sequence and analysis of chromosome 3 of the plant Arabidopsis thaliana.</title>
        <authorList>
            <person name="Salanoubat M."/>
            <person name="Lemcke K."/>
            <person name="Rieger M."/>
            <person name="Ansorge W."/>
            <person name="Unseld M."/>
            <person name="Fartmann B."/>
            <person name="Valle G."/>
            <person name="Bloecker H."/>
            <person name="Perez-Alonso M."/>
            <person name="Obermaier B."/>
            <person name="Delseny M."/>
            <person name="Boutry M."/>
            <person name="Grivell L.A."/>
            <person name="Mache R."/>
            <person name="Puigdomenech P."/>
            <person name="De Simone V."/>
            <person name="Choisne N."/>
            <person name="Artiguenave F."/>
            <person name="Robert C."/>
            <person name="Brottier P."/>
            <person name="Wincker P."/>
            <person name="Cattolico L."/>
            <person name="Weissenbach J."/>
            <person name="Saurin W."/>
            <person name="Quetier F."/>
            <person name="Schaefer M."/>
            <person name="Mueller-Auer S."/>
            <person name="Gabel C."/>
            <person name="Fuchs M."/>
            <person name="Benes V."/>
            <person name="Wurmbach E."/>
            <person name="Drzonek H."/>
            <person name="Erfle H."/>
            <person name="Jordan N."/>
            <person name="Bangert S."/>
            <person name="Wiedelmann R."/>
            <person name="Kranz H."/>
            <person name="Voss H."/>
            <person name="Holland R."/>
            <person name="Brandt P."/>
            <person name="Nyakatura G."/>
            <person name="Vezzi A."/>
            <person name="D'Angelo M."/>
            <person name="Pallavicini A."/>
            <person name="Toppo S."/>
            <person name="Simionati B."/>
            <person name="Conrad A."/>
            <person name="Hornischer K."/>
            <person name="Kauer G."/>
            <person name="Loehnert T.-H."/>
            <person name="Nordsiek G."/>
            <person name="Reichelt J."/>
            <person name="Scharfe M."/>
            <person name="Schoen O."/>
            <person name="Bargues M."/>
            <person name="Terol J."/>
            <person name="Climent J."/>
            <person name="Navarro P."/>
            <person name="Collado C."/>
            <person name="Perez-Perez A."/>
            <person name="Ottenwaelder B."/>
            <person name="Duchemin D."/>
            <person name="Cooke R."/>
            <person name="Laudie M."/>
            <person name="Berger-Llauro C."/>
            <person name="Purnelle B."/>
            <person name="Masuy D."/>
            <person name="de Haan M."/>
            <person name="Maarse A.C."/>
            <person name="Alcaraz J.-P."/>
            <person name="Cottet A."/>
            <person name="Casacuberta E."/>
            <person name="Monfort A."/>
            <person name="Argiriou A."/>
            <person name="Flores M."/>
            <person name="Liguori R."/>
            <person name="Vitale D."/>
            <person name="Mannhaupt G."/>
            <person name="Haase D."/>
            <person name="Schoof H."/>
            <person name="Rudd S."/>
            <person name="Zaccaria P."/>
            <person name="Mewes H.-W."/>
            <person name="Mayer K.F.X."/>
            <person name="Kaul S."/>
            <person name="Town C.D."/>
            <person name="Koo H.L."/>
            <person name="Tallon L.J."/>
            <person name="Jenkins J."/>
            <person name="Rooney T."/>
            <person name="Rizzo M."/>
            <person name="Walts A."/>
            <person name="Utterback T."/>
            <person name="Fujii C.Y."/>
            <person name="Shea T.P."/>
            <person name="Creasy T.H."/>
            <person name="Haas B."/>
            <person name="Maiti R."/>
            <person name="Wu D."/>
            <person name="Peterson J."/>
            <person name="Van Aken S."/>
            <person name="Pai G."/>
            <person name="Militscher J."/>
            <person name="Sellers P."/>
            <person name="Gill J.E."/>
            <person name="Feldblyum T.V."/>
            <person name="Preuss D."/>
            <person name="Lin X."/>
            <person name="Nierman W.C."/>
            <person name="Salzberg S.L."/>
            <person name="White O."/>
            <person name="Venter J.C."/>
            <person name="Fraser C.M."/>
            <person name="Kaneko T."/>
            <person name="Nakamura Y."/>
            <person name="Sato S."/>
            <person name="Kato T."/>
            <person name="Asamizu E."/>
            <person name="Sasamoto S."/>
            <person name="Kimura T."/>
            <person name="Idesawa K."/>
            <person name="Kawashima K."/>
            <person name="Kishida Y."/>
            <person name="Kiyokawa C."/>
            <person name="Kohara M."/>
            <person name="Matsumoto M."/>
            <person name="Matsuno A."/>
            <person name="Muraki A."/>
            <person name="Nakayama S."/>
            <person name="Nakazaki N."/>
            <person name="Shinpo S."/>
            <person name="Takeuchi C."/>
            <person name="Wada T."/>
            <person name="Watanabe A."/>
            <person name="Yamada M."/>
            <person name="Yasuda M."/>
            <person name="Tabata S."/>
        </authorList>
    </citation>
    <scope>NUCLEOTIDE SEQUENCE [LARGE SCALE GENOMIC DNA]</scope>
    <source>
        <strain>cv. Columbia</strain>
    </source>
</reference>
<reference key="2">
    <citation type="journal article" date="2017" name="Plant J.">
        <title>Araport11: a complete reannotation of the Arabidopsis thaliana reference genome.</title>
        <authorList>
            <person name="Cheng C.Y."/>
            <person name="Krishnakumar V."/>
            <person name="Chan A.P."/>
            <person name="Thibaud-Nissen F."/>
            <person name="Schobel S."/>
            <person name="Town C.D."/>
        </authorList>
    </citation>
    <scope>GENOME REANNOTATION</scope>
    <source>
        <strain>cv. Columbia</strain>
    </source>
</reference>
<reference key="3">
    <citation type="journal article" date="2003" name="Science">
        <title>Empirical analysis of transcriptional activity in the Arabidopsis genome.</title>
        <authorList>
            <person name="Yamada K."/>
            <person name="Lim J."/>
            <person name="Dale J.M."/>
            <person name="Chen H."/>
            <person name="Shinn P."/>
            <person name="Palm C.J."/>
            <person name="Southwick A.M."/>
            <person name="Wu H.C."/>
            <person name="Kim C.J."/>
            <person name="Nguyen M."/>
            <person name="Pham P.K."/>
            <person name="Cheuk R.F."/>
            <person name="Karlin-Newmann G."/>
            <person name="Liu S.X."/>
            <person name="Lam B."/>
            <person name="Sakano H."/>
            <person name="Wu T."/>
            <person name="Yu G."/>
            <person name="Miranda M."/>
            <person name="Quach H.L."/>
            <person name="Tripp M."/>
            <person name="Chang C.H."/>
            <person name="Lee J.M."/>
            <person name="Toriumi M.J."/>
            <person name="Chan M.M."/>
            <person name="Tang C.C."/>
            <person name="Onodera C.S."/>
            <person name="Deng J.M."/>
            <person name="Akiyama K."/>
            <person name="Ansari Y."/>
            <person name="Arakawa T."/>
            <person name="Banh J."/>
            <person name="Banno F."/>
            <person name="Bowser L."/>
            <person name="Brooks S.Y."/>
            <person name="Carninci P."/>
            <person name="Chao Q."/>
            <person name="Choy N."/>
            <person name="Enju A."/>
            <person name="Goldsmith A.D."/>
            <person name="Gurjal M."/>
            <person name="Hansen N.F."/>
            <person name="Hayashizaki Y."/>
            <person name="Johnson-Hopson C."/>
            <person name="Hsuan V.W."/>
            <person name="Iida K."/>
            <person name="Karnes M."/>
            <person name="Khan S."/>
            <person name="Koesema E."/>
            <person name="Ishida J."/>
            <person name="Jiang P.X."/>
            <person name="Jones T."/>
            <person name="Kawai J."/>
            <person name="Kamiya A."/>
            <person name="Meyers C."/>
            <person name="Nakajima M."/>
            <person name="Narusaka M."/>
            <person name="Seki M."/>
            <person name="Sakurai T."/>
            <person name="Satou M."/>
            <person name="Tamse R."/>
            <person name="Vaysberg M."/>
            <person name="Wallender E.K."/>
            <person name="Wong C."/>
            <person name="Yamamura Y."/>
            <person name="Yuan S."/>
            <person name="Shinozaki K."/>
            <person name="Davis R.W."/>
            <person name="Theologis A."/>
            <person name="Ecker J.R."/>
        </authorList>
    </citation>
    <scope>NUCLEOTIDE SEQUENCE [LARGE SCALE MRNA]</scope>
    <source>
        <strain>cv. Columbia</strain>
    </source>
</reference>
<reference key="4">
    <citation type="journal article" date="2001" name="Plant Physiol.">
        <title>Phylogenetic relationships within cation transporter families of Arabidopsis.</title>
        <authorList>
            <person name="Maeser P."/>
            <person name="Thomine S."/>
            <person name="Schroeder J.I."/>
            <person name="Ward J.M."/>
            <person name="Hirschi K."/>
            <person name="Sze H."/>
            <person name="Talke I.N."/>
            <person name="Amtmann A."/>
            <person name="Maathuis F.J.M."/>
            <person name="Sanders D."/>
            <person name="Harper J.F."/>
            <person name="Tchieu J."/>
            <person name="Gribskov M."/>
            <person name="Persans M.W."/>
            <person name="Salt D.E."/>
            <person name="Kim S.A."/>
            <person name="Guerinot M.L."/>
        </authorList>
    </citation>
    <scope>GENE FAMILY</scope>
    <scope>NOMENCLATURE</scope>
</reference>
<reference key="5">
    <citation type="journal article" date="2004" name="Plant Physiol.">
        <title>Expression patterns of a novel AtCHX gene family highlight potential roles in osmotic adjustment and K+ homeostasis in pollen development.</title>
        <authorList>
            <person name="Sze H."/>
            <person name="Padmanaban S."/>
            <person name="Cellier F."/>
            <person name="Honys D."/>
            <person name="Cheng N.-H."/>
            <person name="Bock K.W."/>
            <person name="Conejero G."/>
            <person name="Li X."/>
            <person name="Twell D."/>
            <person name="Ward J.M."/>
            <person name="Hirschi K.D."/>
        </authorList>
    </citation>
    <scope>TISSUE SPECIFICITY</scope>
    <scope>GENE FAMILY</scope>
    <scope>NOMENCLATURE</scope>
</reference>
<dbReference type="EMBL" id="AL049711">
    <property type="protein sequence ID" value="CAB41328.1"/>
    <property type="status" value="ALT_SEQ"/>
    <property type="molecule type" value="Genomic_DNA"/>
</dbReference>
<dbReference type="EMBL" id="CP002686">
    <property type="protein sequence ID" value="AEE78888.1"/>
    <property type="molecule type" value="Genomic_DNA"/>
</dbReference>
<dbReference type="EMBL" id="AY140034">
    <property type="protein sequence ID" value="AAM98175.1"/>
    <property type="molecule type" value="mRNA"/>
</dbReference>
<dbReference type="PIR" id="T49087">
    <property type="entry name" value="T49087"/>
</dbReference>
<dbReference type="RefSeq" id="NP_190776.2">
    <property type="nucleotide sequence ID" value="NM_115067.3"/>
</dbReference>
<dbReference type="SMR" id="Q8L709"/>
<dbReference type="BioGRID" id="9689">
    <property type="interactions" value="8"/>
</dbReference>
<dbReference type="IntAct" id="Q8L709">
    <property type="interactions" value="8"/>
</dbReference>
<dbReference type="STRING" id="3702.Q8L709"/>
<dbReference type="PaxDb" id="3702-AT3G52080.1"/>
<dbReference type="ProteomicsDB" id="246842"/>
<dbReference type="EnsemblPlants" id="AT3G52080.1">
    <property type="protein sequence ID" value="AT3G52080.1"/>
    <property type="gene ID" value="AT3G52080"/>
</dbReference>
<dbReference type="GeneID" id="824371"/>
<dbReference type="Gramene" id="AT3G52080.1">
    <property type="protein sequence ID" value="AT3G52080.1"/>
    <property type="gene ID" value="AT3G52080"/>
</dbReference>
<dbReference type="KEGG" id="ath:AT3G52080"/>
<dbReference type="Araport" id="AT3G52080"/>
<dbReference type="TAIR" id="AT3G52080">
    <property type="gene designation" value="CHX28"/>
</dbReference>
<dbReference type="eggNOG" id="KOG1650">
    <property type="taxonomic scope" value="Eukaryota"/>
</dbReference>
<dbReference type="HOGENOM" id="CLU_005126_6_2_1"/>
<dbReference type="InParanoid" id="Q8L709"/>
<dbReference type="OMA" id="VGKINYL"/>
<dbReference type="PhylomeDB" id="Q8L709"/>
<dbReference type="PRO" id="PR:Q8L709"/>
<dbReference type="Proteomes" id="UP000006548">
    <property type="component" value="Chromosome 3"/>
</dbReference>
<dbReference type="ExpressionAtlas" id="Q8L709">
    <property type="expression patterns" value="baseline and differential"/>
</dbReference>
<dbReference type="GO" id="GO:0016020">
    <property type="term" value="C:membrane"/>
    <property type="evidence" value="ECO:0007669"/>
    <property type="project" value="UniProtKB-SubCell"/>
</dbReference>
<dbReference type="GO" id="GO:0015297">
    <property type="term" value="F:antiporter activity"/>
    <property type="evidence" value="ECO:0007669"/>
    <property type="project" value="UniProtKB-KW"/>
</dbReference>
<dbReference type="GO" id="GO:0006813">
    <property type="term" value="P:potassium ion transport"/>
    <property type="evidence" value="ECO:0007669"/>
    <property type="project" value="UniProtKB-KW"/>
</dbReference>
<dbReference type="GO" id="GO:1902600">
    <property type="term" value="P:proton transmembrane transport"/>
    <property type="evidence" value="ECO:0007669"/>
    <property type="project" value="InterPro"/>
</dbReference>
<dbReference type="FunFam" id="1.20.1530.20:FF:000025">
    <property type="entry name" value="Cation/H(+) antiporter 28"/>
    <property type="match status" value="1"/>
</dbReference>
<dbReference type="Gene3D" id="1.20.1530.20">
    <property type="match status" value="1"/>
</dbReference>
<dbReference type="InterPro" id="IPR006153">
    <property type="entry name" value="Cation/H_exchanger_TM"/>
</dbReference>
<dbReference type="InterPro" id="IPR050794">
    <property type="entry name" value="CPA2_transporter"/>
</dbReference>
<dbReference type="InterPro" id="IPR038770">
    <property type="entry name" value="Na+/solute_symporter_sf"/>
</dbReference>
<dbReference type="PANTHER" id="PTHR32468">
    <property type="entry name" value="CATION/H + ANTIPORTER"/>
    <property type="match status" value="1"/>
</dbReference>
<dbReference type="PANTHER" id="PTHR32468:SF145">
    <property type="entry name" value="CATION_H(+) ANTIPORTER 28"/>
    <property type="match status" value="1"/>
</dbReference>
<dbReference type="Pfam" id="PF23256">
    <property type="entry name" value="CHX17_2nd"/>
    <property type="match status" value="1"/>
</dbReference>
<dbReference type="Pfam" id="PF23259">
    <property type="entry name" value="CHX17_C"/>
    <property type="match status" value="1"/>
</dbReference>
<dbReference type="Pfam" id="PF00999">
    <property type="entry name" value="Na_H_Exchanger"/>
    <property type="match status" value="1"/>
</dbReference>
<gene>
    <name type="primary">CHX28</name>
    <name type="ordered locus">At3g52080</name>
    <name type="ORF">F4F15.190</name>
</gene>
<comment type="function">
    <text evidence="1">May operate as a cation/H(+) antiporter.</text>
</comment>
<comment type="subcellular location">
    <subcellularLocation>
        <location evidence="1">Membrane</location>
        <topology evidence="1">Multi-pass membrane protein</topology>
    </subcellularLocation>
</comment>
<comment type="tissue specificity">
    <text evidence="3">Specifically expressed in pollen.</text>
</comment>
<comment type="similarity">
    <text evidence="4">Belongs to the monovalent cation:proton antiporter 2 (CPA2) transporter (TC 2.A.37) family. CHX (TC 2.A.37.4) subfamily.</text>
</comment>
<comment type="sequence caution" evidence="4">
    <conflict type="erroneous gene model prediction">
        <sequence resource="EMBL-CDS" id="CAB41328"/>
    </conflict>
</comment>
<accession>Q8L709</accession>
<accession>Q9SUZ6</accession>